<sequence>MSHKIKIYDTCIGCTQCVRACPTDVLEMIPWQGCKAKQIASAPRTEDCVGCKRCESACPTDFLSVRVYLGSETTRSMGLAY</sequence>
<dbReference type="EC" id="1.97.1.12" evidence="2"/>
<dbReference type="EMBL" id="DQ229107">
    <property type="protein sequence ID" value="ABA61941.1"/>
    <property type="status" value="ALT_INIT"/>
    <property type="molecule type" value="Genomic_DNA"/>
</dbReference>
<dbReference type="RefSeq" id="YP_635799.1">
    <property type="nucleotide sequence ID" value="NC_008097.1"/>
</dbReference>
<dbReference type="SMR" id="Q1ACE8"/>
<dbReference type="GeneID" id="4100307"/>
<dbReference type="GO" id="GO:0009535">
    <property type="term" value="C:chloroplast thylakoid membrane"/>
    <property type="evidence" value="ECO:0007669"/>
    <property type="project" value="UniProtKB-SubCell"/>
</dbReference>
<dbReference type="GO" id="GO:0009522">
    <property type="term" value="C:photosystem I"/>
    <property type="evidence" value="ECO:0007669"/>
    <property type="project" value="UniProtKB-KW"/>
</dbReference>
<dbReference type="GO" id="GO:0051539">
    <property type="term" value="F:4 iron, 4 sulfur cluster binding"/>
    <property type="evidence" value="ECO:0007669"/>
    <property type="project" value="UniProtKB-KW"/>
</dbReference>
<dbReference type="GO" id="GO:0009055">
    <property type="term" value="F:electron transfer activity"/>
    <property type="evidence" value="ECO:0007669"/>
    <property type="project" value="UniProtKB-UniRule"/>
</dbReference>
<dbReference type="GO" id="GO:0046872">
    <property type="term" value="F:metal ion binding"/>
    <property type="evidence" value="ECO:0007669"/>
    <property type="project" value="UniProtKB-KW"/>
</dbReference>
<dbReference type="GO" id="GO:0016491">
    <property type="term" value="F:oxidoreductase activity"/>
    <property type="evidence" value="ECO:0007669"/>
    <property type="project" value="UniProtKB-KW"/>
</dbReference>
<dbReference type="GO" id="GO:0009773">
    <property type="term" value="P:photosynthetic electron transport in photosystem I"/>
    <property type="evidence" value="ECO:0007669"/>
    <property type="project" value="InterPro"/>
</dbReference>
<dbReference type="FunFam" id="3.30.70.20:FF:000001">
    <property type="entry name" value="Photosystem I iron-sulfur center"/>
    <property type="match status" value="1"/>
</dbReference>
<dbReference type="Gene3D" id="3.30.70.20">
    <property type="match status" value="1"/>
</dbReference>
<dbReference type="HAMAP" id="MF_01303">
    <property type="entry name" value="PSI_PsaC"/>
    <property type="match status" value="1"/>
</dbReference>
<dbReference type="InterPro" id="IPR017896">
    <property type="entry name" value="4Fe4S_Fe-S-bd"/>
</dbReference>
<dbReference type="InterPro" id="IPR017900">
    <property type="entry name" value="4Fe4S_Fe_S_CS"/>
</dbReference>
<dbReference type="InterPro" id="IPR050157">
    <property type="entry name" value="PSI_iron-sulfur_center"/>
</dbReference>
<dbReference type="InterPro" id="IPR017491">
    <property type="entry name" value="PSI_PsaC"/>
</dbReference>
<dbReference type="NCBIfam" id="TIGR03048">
    <property type="entry name" value="PS_I_psaC"/>
    <property type="match status" value="1"/>
</dbReference>
<dbReference type="PANTHER" id="PTHR24960:SF79">
    <property type="entry name" value="PHOTOSYSTEM I IRON-SULFUR CENTER"/>
    <property type="match status" value="1"/>
</dbReference>
<dbReference type="PANTHER" id="PTHR24960">
    <property type="entry name" value="PHOTOSYSTEM I IRON-SULFUR CENTER-RELATED"/>
    <property type="match status" value="1"/>
</dbReference>
<dbReference type="Pfam" id="PF14697">
    <property type="entry name" value="Fer4_21"/>
    <property type="match status" value="1"/>
</dbReference>
<dbReference type="SUPFAM" id="SSF54862">
    <property type="entry name" value="4Fe-4S ferredoxins"/>
    <property type="match status" value="1"/>
</dbReference>
<dbReference type="PROSITE" id="PS00198">
    <property type="entry name" value="4FE4S_FER_1"/>
    <property type="match status" value="2"/>
</dbReference>
<dbReference type="PROSITE" id="PS51379">
    <property type="entry name" value="4FE4S_FER_2"/>
    <property type="match status" value="2"/>
</dbReference>
<proteinExistence type="inferred from homology"/>
<gene>
    <name evidence="2" type="primary">psaC</name>
</gene>
<accession>Q1ACE8</accession>
<reference key="1">
    <citation type="journal article" date="2006" name="Mol. Biol. Evol.">
        <title>The chloroplast genome sequence of Chara vulgaris sheds new light into the closest green algal relatives of land plants.</title>
        <authorList>
            <person name="Turmel M."/>
            <person name="Otis C."/>
            <person name="Lemieux C."/>
        </authorList>
    </citation>
    <scope>NUCLEOTIDE SEQUENCE [LARGE SCALE GENOMIC DNA]</scope>
</reference>
<feature type="initiator methionine" description="Removed" evidence="1">
    <location>
        <position position="1"/>
    </location>
</feature>
<feature type="chain" id="PRO_0000275975" description="Photosystem I iron-sulfur center">
    <location>
        <begin position="2"/>
        <end position="81"/>
    </location>
</feature>
<feature type="domain" description="4Fe-4S ferredoxin-type 1" evidence="2">
    <location>
        <begin position="2"/>
        <end position="31"/>
    </location>
</feature>
<feature type="domain" description="4Fe-4S ferredoxin-type 2" evidence="2">
    <location>
        <begin position="39"/>
        <end position="68"/>
    </location>
</feature>
<feature type="binding site" evidence="2">
    <location>
        <position position="11"/>
    </location>
    <ligand>
        <name>[4Fe-4S] cluster</name>
        <dbReference type="ChEBI" id="CHEBI:49883"/>
        <label>1</label>
    </ligand>
</feature>
<feature type="binding site" evidence="2">
    <location>
        <position position="14"/>
    </location>
    <ligand>
        <name>[4Fe-4S] cluster</name>
        <dbReference type="ChEBI" id="CHEBI:49883"/>
        <label>1</label>
    </ligand>
</feature>
<feature type="binding site" evidence="2">
    <location>
        <position position="17"/>
    </location>
    <ligand>
        <name>[4Fe-4S] cluster</name>
        <dbReference type="ChEBI" id="CHEBI:49883"/>
        <label>1</label>
    </ligand>
</feature>
<feature type="binding site" evidence="2">
    <location>
        <position position="21"/>
    </location>
    <ligand>
        <name>[4Fe-4S] cluster</name>
        <dbReference type="ChEBI" id="CHEBI:49883"/>
        <label>2</label>
    </ligand>
</feature>
<feature type="binding site" evidence="2">
    <location>
        <position position="48"/>
    </location>
    <ligand>
        <name>[4Fe-4S] cluster</name>
        <dbReference type="ChEBI" id="CHEBI:49883"/>
        <label>2</label>
    </ligand>
</feature>
<feature type="binding site" evidence="2">
    <location>
        <position position="51"/>
    </location>
    <ligand>
        <name>[4Fe-4S] cluster</name>
        <dbReference type="ChEBI" id="CHEBI:49883"/>
        <label>2</label>
    </ligand>
</feature>
<feature type="binding site" evidence="2">
    <location>
        <position position="54"/>
    </location>
    <ligand>
        <name>[4Fe-4S] cluster</name>
        <dbReference type="ChEBI" id="CHEBI:49883"/>
        <label>2</label>
    </ligand>
</feature>
<feature type="binding site" evidence="2">
    <location>
        <position position="58"/>
    </location>
    <ligand>
        <name>[4Fe-4S] cluster</name>
        <dbReference type="ChEBI" id="CHEBI:49883"/>
        <label>1</label>
    </ligand>
</feature>
<evidence type="ECO:0000250" key="1"/>
<evidence type="ECO:0000255" key="2">
    <source>
        <dbReference type="HAMAP-Rule" id="MF_01303"/>
    </source>
</evidence>
<evidence type="ECO:0000305" key="3"/>
<protein>
    <recommendedName>
        <fullName evidence="2">Photosystem I iron-sulfur center</fullName>
        <ecNumber evidence="2">1.97.1.12</ecNumber>
    </recommendedName>
    <alternativeName>
        <fullName evidence="2">9 kDa polypeptide</fullName>
    </alternativeName>
    <alternativeName>
        <fullName evidence="2">PSI-C</fullName>
    </alternativeName>
    <alternativeName>
        <fullName evidence="2">Photosystem I subunit VII</fullName>
    </alternativeName>
    <alternativeName>
        <fullName evidence="2">PsaC</fullName>
    </alternativeName>
</protein>
<geneLocation type="chloroplast"/>
<keyword id="KW-0004">4Fe-4S</keyword>
<keyword id="KW-0150">Chloroplast</keyword>
<keyword id="KW-0249">Electron transport</keyword>
<keyword id="KW-0408">Iron</keyword>
<keyword id="KW-0411">Iron-sulfur</keyword>
<keyword id="KW-0472">Membrane</keyword>
<keyword id="KW-0479">Metal-binding</keyword>
<keyword id="KW-0560">Oxidoreductase</keyword>
<keyword id="KW-0602">Photosynthesis</keyword>
<keyword id="KW-0603">Photosystem I</keyword>
<keyword id="KW-0934">Plastid</keyword>
<keyword id="KW-0677">Repeat</keyword>
<keyword id="KW-0793">Thylakoid</keyword>
<keyword id="KW-0813">Transport</keyword>
<organism>
    <name type="scientific">Chara vulgaris</name>
    <name type="common">Common stonewort</name>
    <dbReference type="NCBI Taxonomy" id="55564"/>
    <lineage>
        <taxon>Eukaryota</taxon>
        <taxon>Viridiplantae</taxon>
        <taxon>Streptophyta</taxon>
        <taxon>Charophyceae</taxon>
        <taxon>Charales</taxon>
        <taxon>Characeae</taxon>
        <taxon>Chara</taxon>
    </lineage>
</organism>
<comment type="function">
    <text evidence="2">Apoprotein for the two 4Fe-4S centers FA and FB of photosystem I (PSI); essential for photochemical activity. FB is the terminal electron acceptor of PSI, donating electrons to ferredoxin. The C-terminus interacts with PsaA/B/D and helps assemble the protein into the PSI complex. Required for binding of PsaD and PsaE to PSI. PSI is a plastocyanin-ferredoxin oxidoreductase, converting photonic excitation into a charge separation, which transfers an electron from the donor P700 chlorophyll pair to the spectroscopically characterized acceptors A0, A1, FX, FA and FB in turn.</text>
</comment>
<comment type="catalytic activity">
    <reaction evidence="2">
        <text>reduced [plastocyanin] + hnu + oxidized [2Fe-2S]-[ferredoxin] = oxidized [plastocyanin] + reduced [2Fe-2S]-[ferredoxin]</text>
        <dbReference type="Rhea" id="RHEA:30407"/>
        <dbReference type="Rhea" id="RHEA-COMP:10000"/>
        <dbReference type="Rhea" id="RHEA-COMP:10001"/>
        <dbReference type="Rhea" id="RHEA-COMP:10039"/>
        <dbReference type="Rhea" id="RHEA-COMP:10040"/>
        <dbReference type="ChEBI" id="CHEBI:29036"/>
        <dbReference type="ChEBI" id="CHEBI:30212"/>
        <dbReference type="ChEBI" id="CHEBI:33737"/>
        <dbReference type="ChEBI" id="CHEBI:33738"/>
        <dbReference type="ChEBI" id="CHEBI:49552"/>
        <dbReference type="EC" id="1.97.1.12"/>
    </reaction>
</comment>
<comment type="cofactor">
    <cofactor evidence="2">
        <name>[4Fe-4S] cluster</name>
        <dbReference type="ChEBI" id="CHEBI:49883"/>
    </cofactor>
    <text evidence="2">Binds 2 [4Fe-4S] clusters. Cluster 2 is most probably the spectroscopically characterized electron acceptor FA and cluster 1 is most probably FB.</text>
</comment>
<comment type="subunit">
    <text evidence="2">The eukaryotic PSI reaction center is composed of at least 11 subunits.</text>
</comment>
<comment type="subcellular location">
    <subcellularLocation>
        <location evidence="2">Plastid</location>
        <location evidence="2">Chloroplast thylakoid membrane</location>
        <topology evidence="2">Peripheral membrane protein</topology>
        <orientation evidence="2">Stromal side</orientation>
    </subcellularLocation>
</comment>
<comment type="sequence caution" evidence="3">
    <conflict type="erroneous initiation">
        <sequence resource="EMBL-CDS" id="ABA61941"/>
    </conflict>
</comment>
<name>PSAC_CHAVU</name>